<dbReference type="EC" id="2.3.1.234" evidence="1"/>
<dbReference type="EMBL" id="DS027058">
    <property type="protein sequence ID" value="EAW08681.1"/>
    <property type="status" value="ALT_SEQ"/>
    <property type="molecule type" value="Genomic_DNA"/>
</dbReference>
<dbReference type="RefSeq" id="XP_001270107.1">
    <property type="nucleotide sequence ID" value="XM_001270106.1"/>
</dbReference>
<dbReference type="SMR" id="A1CM94"/>
<dbReference type="STRING" id="344612.A1CM94"/>
<dbReference type="GeneID" id="4702129"/>
<dbReference type="KEGG" id="act:ACLA_096140"/>
<dbReference type="eggNOG" id="KOG2708">
    <property type="taxonomic scope" value="Eukaryota"/>
</dbReference>
<dbReference type="OrthoDB" id="10254073at2759"/>
<dbReference type="Proteomes" id="UP000006701">
    <property type="component" value="Unassembled WGS sequence"/>
</dbReference>
<dbReference type="GO" id="GO:0000785">
    <property type="term" value="C:chromatin"/>
    <property type="evidence" value="ECO:0007669"/>
    <property type="project" value="EnsemblFungi"/>
</dbReference>
<dbReference type="GO" id="GO:0005737">
    <property type="term" value="C:cytoplasm"/>
    <property type="evidence" value="ECO:0007669"/>
    <property type="project" value="UniProtKB-SubCell"/>
</dbReference>
<dbReference type="GO" id="GO:0000408">
    <property type="term" value="C:EKC/KEOPS complex"/>
    <property type="evidence" value="ECO:0007669"/>
    <property type="project" value="EnsemblFungi"/>
</dbReference>
<dbReference type="GO" id="GO:0005634">
    <property type="term" value="C:nucleus"/>
    <property type="evidence" value="ECO:0007669"/>
    <property type="project" value="UniProtKB-SubCell"/>
</dbReference>
<dbReference type="GO" id="GO:0031490">
    <property type="term" value="F:chromatin DNA binding"/>
    <property type="evidence" value="ECO:0007669"/>
    <property type="project" value="EnsemblFungi"/>
</dbReference>
<dbReference type="GO" id="GO:0046872">
    <property type="term" value="F:metal ion binding"/>
    <property type="evidence" value="ECO:0007669"/>
    <property type="project" value="UniProtKB-KW"/>
</dbReference>
<dbReference type="GO" id="GO:0061711">
    <property type="term" value="F:N(6)-L-threonylcarbamoyladenine synthase activity"/>
    <property type="evidence" value="ECO:0007669"/>
    <property type="project" value="UniProtKB-EC"/>
</dbReference>
<dbReference type="GO" id="GO:0008252">
    <property type="term" value="F:nucleotidase activity"/>
    <property type="evidence" value="ECO:0007669"/>
    <property type="project" value="EnsemblFungi"/>
</dbReference>
<dbReference type="GO" id="GO:0045944">
    <property type="term" value="P:positive regulation of transcription by RNA polymerase II"/>
    <property type="evidence" value="ECO:0007669"/>
    <property type="project" value="EnsemblFungi"/>
</dbReference>
<dbReference type="GO" id="GO:0000722">
    <property type="term" value="P:telomere maintenance via recombination"/>
    <property type="evidence" value="ECO:0007669"/>
    <property type="project" value="EnsemblFungi"/>
</dbReference>
<dbReference type="GO" id="GO:0002949">
    <property type="term" value="P:tRNA threonylcarbamoyladenosine modification"/>
    <property type="evidence" value="ECO:0007669"/>
    <property type="project" value="UniProtKB-UniRule"/>
</dbReference>
<dbReference type="CDD" id="cd24132">
    <property type="entry name" value="ASKHA_NBD_OSGEP_like_euk"/>
    <property type="match status" value="1"/>
</dbReference>
<dbReference type="FunFam" id="3.30.420.40:FF:000038">
    <property type="entry name" value="Probable tRNA N6-adenosine threonylcarbamoyltransferase"/>
    <property type="match status" value="1"/>
</dbReference>
<dbReference type="FunFam" id="3.30.420.40:FF:000295">
    <property type="entry name" value="Probable tRNA N6-adenosine threonylcarbamoyltransferase"/>
    <property type="match status" value="1"/>
</dbReference>
<dbReference type="Gene3D" id="3.30.420.40">
    <property type="match status" value="2"/>
</dbReference>
<dbReference type="HAMAP" id="MF_01446">
    <property type="entry name" value="Kae1"/>
    <property type="match status" value="1"/>
</dbReference>
<dbReference type="InterPro" id="IPR043129">
    <property type="entry name" value="ATPase_NBD"/>
</dbReference>
<dbReference type="InterPro" id="IPR000905">
    <property type="entry name" value="Gcp-like_dom"/>
</dbReference>
<dbReference type="InterPro" id="IPR017861">
    <property type="entry name" value="KAE1/TsaD"/>
</dbReference>
<dbReference type="InterPro" id="IPR034680">
    <property type="entry name" value="Kae1_archaea_euk"/>
</dbReference>
<dbReference type="NCBIfam" id="TIGR00329">
    <property type="entry name" value="gcp_kae1"/>
    <property type="match status" value="1"/>
</dbReference>
<dbReference type="PANTHER" id="PTHR11735">
    <property type="entry name" value="TRNA N6-ADENOSINE THREONYLCARBAMOYLTRANSFERASE"/>
    <property type="match status" value="1"/>
</dbReference>
<dbReference type="PANTHER" id="PTHR11735:SF14">
    <property type="entry name" value="TRNA N6-ADENOSINE THREONYLCARBAMOYLTRANSFERASE"/>
    <property type="match status" value="1"/>
</dbReference>
<dbReference type="Pfam" id="PF00814">
    <property type="entry name" value="TsaD"/>
    <property type="match status" value="1"/>
</dbReference>
<dbReference type="PRINTS" id="PR00789">
    <property type="entry name" value="OSIALOPTASE"/>
</dbReference>
<dbReference type="SUPFAM" id="SSF53067">
    <property type="entry name" value="Actin-like ATPase domain"/>
    <property type="match status" value="1"/>
</dbReference>
<keyword id="KW-0010">Activator</keyword>
<keyword id="KW-0012">Acyltransferase</keyword>
<keyword id="KW-0963">Cytoplasm</keyword>
<keyword id="KW-0479">Metal-binding</keyword>
<keyword id="KW-0539">Nucleus</keyword>
<keyword id="KW-1185">Reference proteome</keyword>
<keyword id="KW-0804">Transcription</keyword>
<keyword id="KW-0805">Transcription regulation</keyword>
<keyword id="KW-0808">Transferase</keyword>
<keyword id="KW-0819">tRNA processing</keyword>
<proteinExistence type="inferred from homology"/>
<feature type="chain" id="PRO_0000278925" description="tRNA N6-adenosine threonylcarbamoyltransferase">
    <location>
        <begin position="1"/>
        <end position="364"/>
    </location>
</feature>
<feature type="binding site" evidence="1">
    <location>
        <position position="114"/>
    </location>
    <ligand>
        <name>a divalent metal cation</name>
        <dbReference type="ChEBI" id="CHEBI:60240"/>
    </ligand>
</feature>
<feature type="binding site" evidence="1">
    <location>
        <position position="118"/>
    </location>
    <ligand>
        <name>a divalent metal cation</name>
        <dbReference type="ChEBI" id="CHEBI:60240"/>
    </ligand>
</feature>
<feature type="binding site" evidence="1">
    <location>
        <begin position="135"/>
        <end position="139"/>
    </location>
    <ligand>
        <name>substrate</name>
    </ligand>
</feature>
<feature type="binding site" evidence="1">
    <location>
        <position position="135"/>
    </location>
    <ligand>
        <name>a divalent metal cation</name>
        <dbReference type="ChEBI" id="CHEBI:60240"/>
    </ligand>
</feature>
<feature type="binding site" evidence="1">
    <location>
        <position position="167"/>
    </location>
    <ligand>
        <name>substrate</name>
    </ligand>
</feature>
<feature type="binding site" evidence="1">
    <location>
        <position position="182"/>
    </location>
    <ligand>
        <name>substrate</name>
    </ligand>
</feature>
<feature type="binding site" evidence="1">
    <location>
        <position position="186"/>
    </location>
    <ligand>
        <name>substrate</name>
    </ligand>
</feature>
<feature type="binding site" evidence="1">
    <location>
        <position position="295"/>
    </location>
    <ligand>
        <name>substrate</name>
    </ligand>
</feature>
<feature type="binding site" evidence="1">
    <location>
        <position position="323"/>
    </location>
    <ligand>
        <name>a divalent metal cation</name>
        <dbReference type="ChEBI" id="CHEBI:60240"/>
    </ligand>
</feature>
<protein>
    <recommendedName>
        <fullName evidence="1">tRNA N6-adenosine threonylcarbamoyltransferase</fullName>
        <ecNumber evidence="1">2.3.1.234</ecNumber>
    </recommendedName>
    <alternativeName>
        <fullName>N6-L-threonylcarbamoyladenine synthase</fullName>
        <shortName>t(6)A synthase</shortName>
    </alternativeName>
    <alternativeName>
        <fullName evidence="1">t(6)A37 threonylcarbamoyladenosine biosynthesis protein kae1</fullName>
    </alternativeName>
    <alternativeName>
        <fullName evidence="1">tRNA threonylcarbamoyladenosine biosynthesis protein kae1</fullName>
    </alternativeName>
</protein>
<accession>A1CM94</accession>
<gene>
    <name type="primary">kae1</name>
    <name type="ORF">ACLA_096140</name>
</gene>
<reference key="1">
    <citation type="journal article" date="2008" name="PLoS Genet.">
        <title>Genomic islands in the pathogenic filamentous fungus Aspergillus fumigatus.</title>
        <authorList>
            <person name="Fedorova N.D."/>
            <person name="Khaldi N."/>
            <person name="Joardar V.S."/>
            <person name="Maiti R."/>
            <person name="Amedeo P."/>
            <person name="Anderson M.J."/>
            <person name="Crabtree J."/>
            <person name="Silva J.C."/>
            <person name="Badger J.H."/>
            <person name="Albarraq A."/>
            <person name="Angiuoli S."/>
            <person name="Bussey H."/>
            <person name="Bowyer P."/>
            <person name="Cotty P.J."/>
            <person name="Dyer P.S."/>
            <person name="Egan A."/>
            <person name="Galens K."/>
            <person name="Fraser-Liggett C.M."/>
            <person name="Haas B.J."/>
            <person name="Inman J.M."/>
            <person name="Kent R."/>
            <person name="Lemieux S."/>
            <person name="Malavazi I."/>
            <person name="Orvis J."/>
            <person name="Roemer T."/>
            <person name="Ronning C.M."/>
            <person name="Sundaram J.P."/>
            <person name="Sutton G."/>
            <person name="Turner G."/>
            <person name="Venter J.C."/>
            <person name="White O.R."/>
            <person name="Whitty B.R."/>
            <person name="Youngman P."/>
            <person name="Wolfe K.H."/>
            <person name="Goldman G.H."/>
            <person name="Wortman J.R."/>
            <person name="Jiang B."/>
            <person name="Denning D.W."/>
            <person name="Nierman W.C."/>
        </authorList>
    </citation>
    <scope>NUCLEOTIDE SEQUENCE [LARGE SCALE GENOMIC DNA]</scope>
    <source>
        <strain>ATCC 1007 / CBS 513.65 / DSM 816 / NCTC 3887 / NRRL 1 / QM 1276 / 107</strain>
    </source>
</reference>
<sequence length="364" mass="39441">MIAIGLEGSANKLGVGIMLHPEDGSTPQVLANIRHTYVSPPGEGFLPKDTARHHRAWVVKLVKRALREARVSVDDVDCICFTKGPGMGAPLQSVAVAARTLSLLWGKELVGVNHCVGHIEMGRLITGSTNPVVLYVSGGNTQVIAYSSQRYRIFGETLDIAVGNCLDRFARTLHISNDPAPGYNIEQLAKKGKQLVDLPYTVKGMDCSFSGILAAIDGLAASYGLNGKEKEEEEKLVALSDPATSEAVENVKPTRADLCFSLQETIFSMLVEITERAMAHVGSKEVLIVGGVGCNERLQEMMGIMARDRGGSVHATDERFCIDNGIMIAQAGMLAYKTGFRTPLTESTCTQRFRTDGVFVKWRD</sequence>
<organism>
    <name type="scientific">Aspergillus clavatus (strain ATCC 1007 / CBS 513.65 / DSM 816 / NCTC 3887 / NRRL 1 / QM 1276 / 107)</name>
    <dbReference type="NCBI Taxonomy" id="344612"/>
    <lineage>
        <taxon>Eukaryota</taxon>
        <taxon>Fungi</taxon>
        <taxon>Dikarya</taxon>
        <taxon>Ascomycota</taxon>
        <taxon>Pezizomycotina</taxon>
        <taxon>Eurotiomycetes</taxon>
        <taxon>Eurotiomycetidae</taxon>
        <taxon>Eurotiales</taxon>
        <taxon>Aspergillaceae</taxon>
        <taxon>Aspergillus</taxon>
        <taxon>Aspergillus subgen. Fumigati</taxon>
    </lineage>
</organism>
<comment type="function">
    <text evidence="1">Component of the EKC/KEOPS complex that is required for the formation of a threonylcarbamoyl group on adenosine at position 37 (t(6)A37) in tRNAs that read codons beginning with adenine. The complex is probably involved in the transfer of the threonylcarbamoyl moiety of threonylcarbamoyl-AMP (TC-AMP) to the N6 group of A37. Kae1 likely plays a direct catalytic role in this reaction, but requires other protein(s) of the complex to fulfill this activity. The EKC/KEOPS complex also promotes both telomere uncapping and telomere elongation. The complex is required for efficient recruitment of transcriptional coactivators.</text>
</comment>
<comment type="catalytic activity">
    <reaction evidence="1">
        <text>L-threonylcarbamoyladenylate + adenosine(37) in tRNA = N(6)-L-threonylcarbamoyladenosine(37) in tRNA + AMP + H(+)</text>
        <dbReference type="Rhea" id="RHEA:37059"/>
        <dbReference type="Rhea" id="RHEA-COMP:10162"/>
        <dbReference type="Rhea" id="RHEA-COMP:10163"/>
        <dbReference type="ChEBI" id="CHEBI:15378"/>
        <dbReference type="ChEBI" id="CHEBI:73682"/>
        <dbReference type="ChEBI" id="CHEBI:74411"/>
        <dbReference type="ChEBI" id="CHEBI:74418"/>
        <dbReference type="ChEBI" id="CHEBI:456215"/>
        <dbReference type="EC" id="2.3.1.234"/>
    </reaction>
</comment>
<comment type="cofactor">
    <cofactor evidence="1">
        <name>a divalent metal cation</name>
        <dbReference type="ChEBI" id="CHEBI:60240"/>
    </cofactor>
    <text evidence="1">Binds 1 divalent metal cation per subunit.</text>
</comment>
<comment type="subunit">
    <text evidence="1">Component of the EKC/KEOPS complex composed of at least bud32, cgi121, gon7, kae1 and pcc1; the whole complex dimerizes.</text>
</comment>
<comment type="subcellular location">
    <subcellularLocation>
        <location evidence="1">Cytoplasm</location>
    </subcellularLocation>
    <subcellularLocation>
        <location evidence="1">Nucleus</location>
    </subcellularLocation>
</comment>
<comment type="similarity">
    <text evidence="1">Belongs to the KAE1 / TsaD family.</text>
</comment>
<comment type="sequence caution" evidence="2">
    <conflict type="erroneous gene model prediction">
        <sequence resource="EMBL-CDS" id="EAW08681"/>
    </conflict>
</comment>
<name>KAE1_ASPCL</name>
<evidence type="ECO:0000255" key="1">
    <source>
        <dbReference type="HAMAP-Rule" id="MF_03180"/>
    </source>
</evidence>
<evidence type="ECO:0000305" key="2"/>